<accession>C0QS47</accession>
<gene>
    <name evidence="1" type="primary">ndk</name>
    <name type="ordered locus">PERMA_1729</name>
</gene>
<organism>
    <name type="scientific">Persephonella marina (strain DSM 14350 / EX-H1)</name>
    <dbReference type="NCBI Taxonomy" id="123214"/>
    <lineage>
        <taxon>Bacteria</taxon>
        <taxon>Pseudomonadati</taxon>
        <taxon>Aquificota</taxon>
        <taxon>Aquificia</taxon>
        <taxon>Aquificales</taxon>
        <taxon>Hydrogenothermaceae</taxon>
        <taxon>Persephonella</taxon>
    </lineage>
</organism>
<protein>
    <recommendedName>
        <fullName evidence="1">Nucleoside diphosphate kinase</fullName>
        <shortName evidence="1">NDK</shortName>
        <shortName evidence="1">NDP kinase</shortName>
        <ecNumber evidence="1">2.7.4.6</ecNumber>
    </recommendedName>
    <alternativeName>
        <fullName evidence="1">Nucleoside-2-P kinase</fullName>
    </alternativeName>
</protein>
<keyword id="KW-0067">ATP-binding</keyword>
<keyword id="KW-0963">Cytoplasm</keyword>
<keyword id="KW-0418">Kinase</keyword>
<keyword id="KW-0460">Magnesium</keyword>
<keyword id="KW-0479">Metal-binding</keyword>
<keyword id="KW-0546">Nucleotide metabolism</keyword>
<keyword id="KW-0547">Nucleotide-binding</keyword>
<keyword id="KW-0597">Phosphoprotein</keyword>
<keyword id="KW-1185">Reference proteome</keyword>
<keyword id="KW-0808">Transferase</keyword>
<comment type="function">
    <text evidence="1">Major role in the synthesis of nucleoside triphosphates other than ATP. The ATP gamma phosphate is transferred to the NDP beta phosphate via a ping-pong mechanism, using a phosphorylated active-site intermediate.</text>
</comment>
<comment type="catalytic activity">
    <reaction evidence="1">
        <text>a 2'-deoxyribonucleoside 5'-diphosphate + ATP = a 2'-deoxyribonucleoside 5'-triphosphate + ADP</text>
        <dbReference type="Rhea" id="RHEA:44640"/>
        <dbReference type="ChEBI" id="CHEBI:30616"/>
        <dbReference type="ChEBI" id="CHEBI:61560"/>
        <dbReference type="ChEBI" id="CHEBI:73316"/>
        <dbReference type="ChEBI" id="CHEBI:456216"/>
        <dbReference type="EC" id="2.7.4.6"/>
    </reaction>
</comment>
<comment type="catalytic activity">
    <reaction evidence="1">
        <text>a ribonucleoside 5'-diphosphate + ATP = a ribonucleoside 5'-triphosphate + ADP</text>
        <dbReference type="Rhea" id="RHEA:18113"/>
        <dbReference type="ChEBI" id="CHEBI:30616"/>
        <dbReference type="ChEBI" id="CHEBI:57930"/>
        <dbReference type="ChEBI" id="CHEBI:61557"/>
        <dbReference type="ChEBI" id="CHEBI:456216"/>
        <dbReference type="EC" id="2.7.4.6"/>
    </reaction>
</comment>
<comment type="cofactor">
    <cofactor evidence="1">
        <name>Mg(2+)</name>
        <dbReference type="ChEBI" id="CHEBI:18420"/>
    </cofactor>
</comment>
<comment type="subunit">
    <text evidence="1">Homotetramer.</text>
</comment>
<comment type="subcellular location">
    <subcellularLocation>
        <location evidence="1">Cytoplasm</location>
    </subcellularLocation>
</comment>
<comment type="similarity">
    <text evidence="1">Belongs to the NDK family.</text>
</comment>
<sequence length="140" mass="15883">MSVERTLMLVKPDAVRRNLEGKIIAHVQEKGFKLVALKKLKLTKEQAQQFYIVHKDRPFYDELCEFMSSGPIVAMVWEGENAISRIREIMGATNPEEAEEGTLRKLYGTNVGENAVHGSDSPESAKVEIPFFFSRLEIVE</sequence>
<evidence type="ECO:0000255" key="1">
    <source>
        <dbReference type="HAMAP-Rule" id="MF_00451"/>
    </source>
</evidence>
<name>NDK_PERMH</name>
<feature type="chain" id="PRO_1000192283" description="Nucleoside diphosphate kinase">
    <location>
        <begin position="1"/>
        <end position="140"/>
    </location>
</feature>
<feature type="active site" description="Pros-phosphohistidine intermediate" evidence="1">
    <location>
        <position position="117"/>
    </location>
</feature>
<feature type="binding site" evidence="1">
    <location>
        <position position="11"/>
    </location>
    <ligand>
        <name>ATP</name>
        <dbReference type="ChEBI" id="CHEBI:30616"/>
    </ligand>
</feature>
<feature type="binding site" evidence="1">
    <location>
        <position position="59"/>
    </location>
    <ligand>
        <name>ATP</name>
        <dbReference type="ChEBI" id="CHEBI:30616"/>
    </ligand>
</feature>
<feature type="binding site" evidence="1">
    <location>
        <position position="87"/>
    </location>
    <ligand>
        <name>ATP</name>
        <dbReference type="ChEBI" id="CHEBI:30616"/>
    </ligand>
</feature>
<feature type="binding site" evidence="1">
    <location>
        <position position="93"/>
    </location>
    <ligand>
        <name>ATP</name>
        <dbReference type="ChEBI" id="CHEBI:30616"/>
    </ligand>
</feature>
<feature type="binding site" evidence="1">
    <location>
        <position position="104"/>
    </location>
    <ligand>
        <name>ATP</name>
        <dbReference type="ChEBI" id="CHEBI:30616"/>
    </ligand>
</feature>
<feature type="binding site" evidence="1">
    <location>
        <position position="114"/>
    </location>
    <ligand>
        <name>ATP</name>
        <dbReference type="ChEBI" id="CHEBI:30616"/>
    </ligand>
</feature>
<proteinExistence type="inferred from homology"/>
<dbReference type="EC" id="2.7.4.6" evidence="1"/>
<dbReference type="EMBL" id="CP001230">
    <property type="protein sequence ID" value="ACO04170.1"/>
    <property type="molecule type" value="Genomic_DNA"/>
</dbReference>
<dbReference type="RefSeq" id="WP_012676408.1">
    <property type="nucleotide sequence ID" value="NC_012440.1"/>
</dbReference>
<dbReference type="SMR" id="C0QS47"/>
<dbReference type="STRING" id="123214.PERMA_1729"/>
<dbReference type="PaxDb" id="123214-PERMA_1729"/>
<dbReference type="KEGG" id="pmx:PERMA_1729"/>
<dbReference type="eggNOG" id="COG0105">
    <property type="taxonomic scope" value="Bacteria"/>
</dbReference>
<dbReference type="HOGENOM" id="CLU_060216_8_1_0"/>
<dbReference type="Proteomes" id="UP000001366">
    <property type="component" value="Chromosome"/>
</dbReference>
<dbReference type="GO" id="GO:0005737">
    <property type="term" value="C:cytoplasm"/>
    <property type="evidence" value="ECO:0007669"/>
    <property type="project" value="UniProtKB-SubCell"/>
</dbReference>
<dbReference type="GO" id="GO:0005524">
    <property type="term" value="F:ATP binding"/>
    <property type="evidence" value="ECO:0007669"/>
    <property type="project" value="UniProtKB-UniRule"/>
</dbReference>
<dbReference type="GO" id="GO:0046872">
    <property type="term" value="F:metal ion binding"/>
    <property type="evidence" value="ECO:0007669"/>
    <property type="project" value="UniProtKB-KW"/>
</dbReference>
<dbReference type="GO" id="GO:0004550">
    <property type="term" value="F:nucleoside diphosphate kinase activity"/>
    <property type="evidence" value="ECO:0007669"/>
    <property type="project" value="UniProtKB-UniRule"/>
</dbReference>
<dbReference type="GO" id="GO:0006241">
    <property type="term" value="P:CTP biosynthetic process"/>
    <property type="evidence" value="ECO:0007669"/>
    <property type="project" value="UniProtKB-UniRule"/>
</dbReference>
<dbReference type="GO" id="GO:0006183">
    <property type="term" value="P:GTP biosynthetic process"/>
    <property type="evidence" value="ECO:0007669"/>
    <property type="project" value="UniProtKB-UniRule"/>
</dbReference>
<dbReference type="GO" id="GO:0006228">
    <property type="term" value="P:UTP biosynthetic process"/>
    <property type="evidence" value="ECO:0007669"/>
    <property type="project" value="UniProtKB-UniRule"/>
</dbReference>
<dbReference type="CDD" id="cd04413">
    <property type="entry name" value="NDPk_I"/>
    <property type="match status" value="1"/>
</dbReference>
<dbReference type="FunFam" id="3.30.70.141:FF:000003">
    <property type="entry name" value="Nucleoside diphosphate kinase"/>
    <property type="match status" value="1"/>
</dbReference>
<dbReference type="Gene3D" id="3.30.70.141">
    <property type="entry name" value="Nucleoside diphosphate kinase-like domain"/>
    <property type="match status" value="1"/>
</dbReference>
<dbReference type="HAMAP" id="MF_00451">
    <property type="entry name" value="NDP_kinase"/>
    <property type="match status" value="1"/>
</dbReference>
<dbReference type="InterPro" id="IPR034907">
    <property type="entry name" value="NDK-like_dom"/>
</dbReference>
<dbReference type="InterPro" id="IPR036850">
    <property type="entry name" value="NDK-like_dom_sf"/>
</dbReference>
<dbReference type="InterPro" id="IPR001564">
    <property type="entry name" value="Nucleoside_diP_kinase"/>
</dbReference>
<dbReference type="InterPro" id="IPR023005">
    <property type="entry name" value="Nucleoside_diP_kinase_AS"/>
</dbReference>
<dbReference type="NCBIfam" id="NF001908">
    <property type="entry name" value="PRK00668.1"/>
    <property type="match status" value="1"/>
</dbReference>
<dbReference type="PANTHER" id="PTHR11349">
    <property type="entry name" value="NUCLEOSIDE DIPHOSPHATE KINASE"/>
    <property type="match status" value="1"/>
</dbReference>
<dbReference type="Pfam" id="PF00334">
    <property type="entry name" value="NDK"/>
    <property type="match status" value="1"/>
</dbReference>
<dbReference type="PRINTS" id="PR01243">
    <property type="entry name" value="NUCDPKINASE"/>
</dbReference>
<dbReference type="SMART" id="SM00562">
    <property type="entry name" value="NDK"/>
    <property type="match status" value="1"/>
</dbReference>
<dbReference type="SUPFAM" id="SSF54919">
    <property type="entry name" value="Nucleoside diphosphate kinase, NDK"/>
    <property type="match status" value="1"/>
</dbReference>
<dbReference type="PROSITE" id="PS00469">
    <property type="entry name" value="NDPK"/>
    <property type="match status" value="1"/>
</dbReference>
<dbReference type="PROSITE" id="PS51374">
    <property type="entry name" value="NDPK_LIKE"/>
    <property type="match status" value="1"/>
</dbReference>
<reference key="1">
    <citation type="journal article" date="2009" name="J. Bacteriol.">
        <title>Complete and draft genome sequences of six members of the Aquificales.</title>
        <authorList>
            <person name="Reysenbach A.-L."/>
            <person name="Hamamura N."/>
            <person name="Podar M."/>
            <person name="Griffiths E."/>
            <person name="Ferreira S."/>
            <person name="Hochstein R."/>
            <person name="Heidelberg J."/>
            <person name="Johnson J."/>
            <person name="Mead D."/>
            <person name="Pohorille A."/>
            <person name="Sarmiento M."/>
            <person name="Schweighofer K."/>
            <person name="Seshadri R."/>
            <person name="Voytek M.A."/>
        </authorList>
    </citation>
    <scope>NUCLEOTIDE SEQUENCE [LARGE SCALE GENOMIC DNA]</scope>
    <source>
        <strain>DSM 14350 / EX-H1</strain>
    </source>
</reference>